<dbReference type="EC" id="6.3.2.8" evidence="1"/>
<dbReference type="EMBL" id="AE008691">
    <property type="protein sequence ID" value="AAM25699.1"/>
    <property type="molecule type" value="Genomic_DNA"/>
</dbReference>
<dbReference type="RefSeq" id="WP_011026576.1">
    <property type="nucleotide sequence ID" value="NC_003869.1"/>
</dbReference>
<dbReference type="SMR" id="Q8R749"/>
<dbReference type="STRING" id="273068.TTE2575"/>
<dbReference type="KEGG" id="tte:TTE2575"/>
<dbReference type="eggNOG" id="COG0773">
    <property type="taxonomic scope" value="Bacteria"/>
</dbReference>
<dbReference type="HOGENOM" id="CLU_028104_1_0_9"/>
<dbReference type="OrthoDB" id="9804126at2"/>
<dbReference type="UniPathway" id="UPA00219"/>
<dbReference type="Proteomes" id="UP000000555">
    <property type="component" value="Chromosome"/>
</dbReference>
<dbReference type="GO" id="GO:0005737">
    <property type="term" value="C:cytoplasm"/>
    <property type="evidence" value="ECO:0007669"/>
    <property type="project" value="UniProtKB-SubCell"/>
</dbReference>
<dbReference type="GO" id="GO:0005524">
    <property type="term" value="F:ATP binding"/>
    <property type="evidence" value="ECO:0007669"/>
    <property type="project" value="UniProtKB-UniRule"/>
</dbReference>
<dbReference type="GO" id="GO:0008763">
    <property type="term" value="F:UDP-N-acetylmuramate-L-alanine ligase activity"/>
    <property type="evidence" value="ECO:0007669"/>
    <property type="project" value="UniProtKB-UniRule"/>
</dbReference>
<dbReference type="GO" id="GO:0051301">
    <property type="term" value="P:cell division"/>
    <property type="evidence" value="ECO:0007669"/>
    <property type="project" value="UniProtKB-KW"/>
</dbReference>
<dbReference type="GO" id="GO:0071555">
    <property type="term" value="P:cell wall organization"/>
    <property type="evidence" value="ECO:0007669"/>
    <property type="project" value="UniProtKB-KW"/>
</dbReference>
<dbReference type="GO" id="GO:0009252">
    <property type="term" value="P:peptidoglycan biosynthetic process"/>
    <property type="evidence" value="ECO:0007669"/>
    <property type="project" value="UniProtKB-UniRule"/>
</dbReference>
<dbReference type="GO" id="GO:0008360">
    <property type="term" value="P:regulation of cell shape"/>
    <property type="evidence" value="ECO:0007669"/>
    <property type="project" value="UniProtKB-KW"/>
</dbReference>
<dbReference type="Gene3D" id="3.90.190.20">
    <property type="entry name" value="Mur ligase, C-terminal domain"/>
    <property type="match status" value="1"/>
</dbReference>
<dbReference type="Gene3D" id="3.40.1190.10">
    <property type="entry name" value="Mur-like, catalytic domain"/>
    <property type="match status" value="1"/>
</dbReference>
<dbReference type="Gene3D" id="3.40.50.720">
    <property type="entry name" value="NAD(P)-binding Rossmann-like Domain"/>
    <property type="match status" value="1"/>
</dbReference>
<dbReference type="HAMAP" id="MF_00046">
    <property type="entry name" value="MurC"/>
    <property type="match status" value="1"/>
</dbReference>
<dbReference type="InterPro" id="IPR036565">
    <property type="entry name" value="Mur-like_cat_sf"/>
</dbReference>
<dbReference type="InterPro" id="IPR004101">
    <property type="entry name" value="Mur_ligase_C"/>
</dbReference>
<dbReference type="InterPro" id="IPR036615">
    <property type="entry name" value="Mur_ligase_C_dom_sf"/>
</dbReference>
<dbReference type="InterPro" id="IPR013221">
    <property type="entry name" value="Mur_ligase_cen"/>
</dbReference>
<dbReference type="InterPro" id="IPR000713">
    <property type="entry name" value="Mur_ligase_N"/>
</dbReference>
<dbReference type="InterPro" id="IPR050061">
    <property type="entry name" value="MurCDEF_pg_biosynth"/>
</dbReference>
<dbReference type="InterPro" id="IPR005758">
    <property type="entry name" value="UDP-N-AcMur_Ala_ligase_MurC"/>
</dbReference>
<dbReference type="NCBIfam" id="TIGR01082">
    <property type="entry name" value="murC"/>
    <property type="match status" value="1"/>
</dbReference>
<dbReference type="PANTHER" id="PTHR43445:SF3">
    <property type="entry name" value="UDP-N-ACETYLMURAMATE--L-ALANINE LIGASE"/>
    <property type="match status" value="1"/>
</dbReference>
<dbReference type="PANTHER" id="PTHR43445">
    <property type="entry name" value="UDP-N-ACETYLMURAMATE--L-ALANINE LIGASE-RELATED"/>
    <property type="match status" value="1"/>
</dbReference>
<dbReference type="Pfam" id="PF01225">
    <property type="entry name" value="Mur_ligase"/>
    <property type="match status" value="1"/>
</dbReference>
<dbReference type="Pfam" id="PF02875">
    <property type="entry name" value="Mur_ligase_C"/>
    <property type="match status" value="1"/>
</dbReference>
<dbReference type="Pfam" id="PF08245">
    <property type="entry name" value="Mur_ligase_M"/>
    <property type="match status" value="1"/>
</dbReference>
<dbReference type="SUPFAM" id="SSF51984">
    <property type="entry name" value="MurCD N-terminal domain"/>
    <property type="match status" value="1"/>
</dbReference>
<dbReference type="SUPFAM" id="SSF53623">
    <property type="entry name" value="MurD-like peptide ligases, catalytic domain"/>
    <property type="match status" value="1"/>
</dbReference>
<dbReference type="SUPFAM" id="SSF53244">
    <property type="entry name" value="MurD-like peptide ligases, peptide-binding domain"/>
    <property type="match status" value="1"/>
</dbReference>
<gene>
    <name evidence="1" type="primary">murC</name>
    <name type="ordered locus">TTE2575</name>
</gene>
<sequence>MEIDLEKFKRIHFIGIGGISMSGLAHILLEEGHTITGSDIKNSHLIERLEKEGAKINIPHMAESVIGADLVVYTAAIHDDNVEYQKAKELGIPIIDRATLLGLIMKKYKFGVAVAGSHGKTTTTSLISVILDRAGYDPTVLVGGEIDAIGGNVRVGKSEYFVTEACEYTDSFLKFYPYIAVILNVDSDHLDYFKNIDNIKQSFRQFASLVPSDGFVVACKDDANTMHVIKGLEKNIVTYGINEKSDWQAKDITYDEKGCASFNVYYRGKFIGHFKLSIPGKHNIYNALASLAVTYLLGVDTEKAKEYIKEFKGTHRRFEVKGVVEGVTVVDDYAHHPAEIHATLEAAKNYPHKRIIAIFQPHTYSRTKALLSDFAESFDAADKIIITDIYAAREKDTGIVSSKDLVDLIFKRGKDVLYIKDFDSIVEYLKENTEEGDLVLTIGAGNIYEVGEKFLEENKK</sequence>
<name>MURC_CALS4</name>
<reference key="1">
    <citation type="journal article" date="2002" name="Genome Res.">
        <title>A complete sequence of the T. tengcongensis genome.</title>
        <authorList>
            <person name="Bao Q."/>
            <person name="Tian Y."/>
            <person name="Li W."/>
            <person name="Xu Z."/>
            <person name="Xuan Z."/>
            <person name="Hu S."/>
            <person name="Dong W."/>
            <person name="Yang J."/>
            <person name="Chen Y."/>
            <person name="Xue Y."/>
            <person name="Xu Y."/>
            <person name="Lai X."/>
            <person name="Huang L."/>
            <person name="Dong X."/>
            <person name="Ma Y."/>
            <person name="Ling L."/>
            <person name="Tan H."/>
            <person name="Chen R."/>
            <person name="Wang J."/>
            <person name="Yu J."/>
            <person name="Yang H."/>
        </authorList>
    </citation>
    <scope>NUCLEOTIDE SEQUENCE [LARGE SCALE GENOMIC DNA]</scope>
    <source>
        <strain>DSM 15242 / JCM 11007 / NBRC 100824 / MB4</strain>
    </source>
</reference>
<proteinExistence type="inferred from homology"/>
<comment type="function">
    <text evidence="1">Cell wall formation.</text>
</comment>
<comment type="catalytic activity">
    <reaction evidence="1">
        <text>UDP-N-acetyl-alpha-D-muramate + L-alanine + ATP = UDP-N-acetyl-alpha-D-muramoyl-L-alanine + ADP + phosphate + H(+)</text>
        <dbReference type="Rhea" id="RHEA:23372"/>
        <dbReference type="ChEBI" id="CHEBI:15378"/>
        <dbReference type="ChEBI" id="CHEBI:30616"/>
        <dbReference type="ChEBI" id="CHEBI:43474"/>
        <dbReference type="ChEBI" id="CHEBI:57972"/>
        <dbReference type="ChEBI" id="CHEBI:70757"/>
        <dbReference type="ChEBI" id="CHEBI:83898"/>
        <dbReference type="ChEBI" id="CHEBI:456216"/>
        <dbReference type="EC" id="6.3.2.8"/>
    </reaction>
</comment>
<comment type="pathway">
    <text evidence="1">Cell wall biogenesis; peptidoglycan biosynthesis.</text>
</comment>
<comment type="subcellular location">
    <subcellularLocation>
        <location evidence="1">Cytoplasm</location>
    </subcellularLocation>
</comment>
<comment type="similarity">
    <text evidence="1">Belongs to the MurCDEF family.</text>
</comment>
<organism>
    <name type="scientific">Caldanaerobacter subterraneus subsp. tengcongensis (strain DSM 15242 / JCM 11007 / NBRC 100824 / MB4)</name>
    <name type="common">Thermoanaerobacter tengcongensis</name>
    <dbReference type="NCBI Taxonomy" id="273068"/>
    <lineage>
        <taxon>Bacteria</taxon>
        <taxon>Bacillati</taxon>
        <taxon>Bacillota</taxon>
        <taxon>Clostridia</taxon>
        <taxon>Thermoanaerobacterales</taxon>
        <taxon>Thermoanaerobacteraceae</taxon>
        <taxon>Caldanaerobacter</taxon>
    </lineage>
</organism>
<feature type="chain" id="PRO_0000182178" description="UDP-N-acetylmuramate--L-alanine ligase">
    <location>
        <begin position="1"/>
        <end position="460"/>
    </location>
</feature>
<feature type="binding site" evidence="1">
    <location>
        <begin position="116"/>
        <end position="122"/>
    </location>
    <ligand>
        <name>ATP</name>
        <dbReference type="ChEBI" id="CHEBI:30616"/>
    </ligand>
</feature>
<protein>
    <recommendedName>
        <fullName evidence="1">UDP-N-acetylmuramate--L-alanine ligase</fullName>
        <ecNumber evidence="1">6.3.2.8</ecNumber>
    </recommendedName>
    <alternativeName>
        <fullName evidence="1">UDP-N-acetylmuramoyl-L-alanine synthetase</fullName>
    </alternativeName>
</protein>
<keyword id="KW-0067">ATP-binding</keyword>
<keyword id="KW-0131">Cell cycle</keyword>
<keyword id="KW-0132">Cell division</keyword>
<keyword id="KW-0133">Cell shape</keyword>
<keyword id="KW-0961">Cell wall biogenesis/degradation</keyword>
<keyword id="KW-0963">Cytoplasm</keyword>
<keyword id="KW-0436">Ligase</keyword>
<keyword id="KW-0547">Nucleotide-binding</keyword>
<keyword id="KW-0573">Peptidoglycan synthesis</keyword>
<keyword id="KW-1185">Reference proteome</keyword>
<accession>Q8R749</accession>
<evidence type="ECO:0000255" key="1">
    <source>
        <dbReference type="HAMAP-Rule" id="MF_00046"/>
    </source>
</evidence>